<gene>
    <name evidence="14" type="primary">CtsF</name>
    <name evidence="14" type="ORF">CG12163</name>
</gene>
<proteinExistence type="evidence at transcript level"/>
<reference evidence="13" key="1">
    <citation type="journal article" date="2000" name="Science">
        <title>The genome sequence of Drosophila melanogaster.</title>
        <authorList>
            <person name="Adams M.D."/>
            <person name="Celniker S.E."/>
            <person name="Holt R.A."/>
            <person name="Evans C.A."/>
            <person name="Gocayne J.D."/>
            <person name="Amanatides P.G."/>
            <person name="Scherer S.E."/>
            <person name="Li P.W."/>
            <person name="Hoskins R.A."/>
            <person name="Galle R.F."/>
            <person name="George R.A."/>
            <person name="Lewis S.E."/>
            <person name="Richards S."/>
            <person name="Ashburner M."/>
            <person name="Henderson S.N."/>
            <person name="Sutton G.G."/>
            <person name="Wortman J.R."/>
            <person name="Yandell M.D."/>
            <person name="Zhang Q."/>
            <person name="Chen L.X."/>
            <person name="Brandon R.C."/>
            <person name="Rogers Y.-H.C."/>
            <person name="Blazej R.G."/>
            <person name="Champe M."/>
            <person name="Pfeiffer B.D."/>
            <person name="Wan K.H."/>
            <person name="Doyle C."/>
            <person name="Baxter E.G."/>
            <person name="Helt G."/>
            <person name="Nelson C.R."/>
            <person name="Miklos G.L.G."/>
            <person name="Abril J.F."/>
            <person name="Agbayani A."/>
            <person name="An H.-J."/>
            <person name="Andrews-Pfannkoch C."/>
            <person name="Baldwin D."/>
            <person name="Ballew R.M."/>
            <person name="Basu A."/>
            <person name="Baxendale J."/>
            <person name="Bayraktaroglu L."/>
            <person name="Beasley E.M."/>
            <person name="Beeson K.Y."/>
            <person name="Benos P.V."/>
            <person name="Berman B.P."/>
            <person name="Bhandari D."/>
            <person name="Bolshakov S."/>
            <person name="Borkova D."/>
            <person name="Botchan M.R."/>
            <person name="Bouck J."/>
            <person name="Brokstein P."/>
            <person name="Brottier P."/>
            <person name="Burtis K.C."/>
            <person name="Busam D.A."/>
            <person name="Butler H."/>
            <person name="Cadieu E."/>
            <person name="Center A."/>
            <person name="Chandra I."/>
            <person name="Cherry J.M."/>
            <person name="Cawley S."/>
            <person name="Dahlke C."/>
            <person name="Davenport L.B."/>
            <person name="Davies P."/>
            <person name="de Pablos B."/>
            <person name="Delcher A."/>
            <person name="Deng Z."/>
            <person name="Mays A.D."/>
            <person name="Dew I."/>
            <person name="Dietz S.M."/>
            <person name="Dodson K."/>
            <person name="Doup L.E."/>
            <person name="Downes M."/>
            <person name="Dugan-Rocha S."/>
            <person name="Dunkov B.C."/>
            <person name="Dunn P."/>
            <person name="Durbin K.J."/>
            <person name="Evangelista C.C."/>
            <person name="Ferraz C."/>
            <person name="Ferriera S."/>
            <person name="Fleischmann W."/>
            <person name="Fosler C."/>
            <person name="Gabrielian A.E."/>
            <person name="Garg N.S."/>
            <person name="Gelbart W.M."/>
            <person name="Glasser K."/>
            <person name="Glodek A."/>
            <person name="Gong F."/>
            <person name="Gorrell J.H."/>
            <person name="Gu Z."/>
            <person name="Guan P."/>
            <person name="Harris M."/>
            <person name="Harris N.L."/>
            <person name="Harvey D.A."/>
            <person name="Heiman T.J."/>
            <person name="Hernandez J.R."/>
            <person name="Houck J."/>
            <person name="Hostin D."/>
            <person name="Houston K.A."/>
            <person name="Howland T.J."/>
            <person name="Wei M.-H."/>
            <person name="Ibegwam C."/>
            <person name="Jalali M."/>
            <person name="Kalush F."/>
            <person name="Karpen G.H."/>
            <person name="Ke Z."/>
            <person name="Kennison J.A."/>
            <person name="Ketchum K.A."/>
            <person name="Kimmel B.E."/>
            <person name="Kodira C.D."/>
            <person name="Kraft C.L."/>
            <person name="Kravitz S."/>
            <person name="Kulp D."/>
            <person name="Lai Z."/>
            <person name="Lasko P."/>
            <person name="Lei Y."/>
            <person name="Levitsky A.A."/>
            <person name="Li J.H."/>
            <person name="Li Z."/>
            <person name="Liang Y."/>
            <person name="Lin X."/>
            <person name="Liu X."/>
            <person name="Mattei B."/>
            <person name="McIntosh T.C."/>
            <person name="McLeod M.P."/>
            <person name="McPherson D."/>
            <person name="Merkulov G."/>
            <person name="Milshina N.V."/>
            <person name="Mobarry C."/>
            <person name="Morris J."/>
            <person name="Moshrefi A."/>
            <person name="Mount S.M."/>
            <person name="Moy M."/>
            <person name="Murphy B."/>
            <person name="Murphy L."/>
            <person name="Muzny D.M."/>
            <person name="Nelson D.L."/>
            <person name="Nelson D.R."/>
            <person name="Nelson K.A."/>
            <person name="Nixon K."/>
            <person name="Nusskern D.R."/>
            <person name="Pacleb J.M."/>
            <person name="Palazzolo M."/>
            <person name="Pittman G.S."/>
            <person name="Pan S."/>
            <person name="Pollard J."/>
            <person name="Puri V."/>
            <person name="Reese M.G."/>
            <person name="Reinert K."/>
            <person name="Remington K."/>
            <person name="Saunders R.D.C."/>
            <person name="Scheeler F."/>
            <person name="Shen H."/>
            <person name="Shue B.C."/>
            <person name="Siden-Kiamos I."/>
            <person name="Simpson M."/>
            <person name="Skupski M.P."/>
            <person name="Smith T.J."/>
            <person name="Spier E."/>
            <person name="Spradling A.C."/>
            <person name="Stapleton M."/>
            <person name="Strong R."/>
            <person name="Sun E."/>
            <person name="Svirskas R."/>
            <person name="Tector C."/>
            <person name="Turner R."/>
            <person name="Venter E."/>
            <person name="Wang A.H."/>
            <person name="Wang X."/>
            <person name="Wang Z.-Y."/>
            <person name="Wassarman D.A."/>
            <person name="Weinstock G.M."/>
            <person name="Weissenbach J."/>
            <person name="Williams S.M."/>
            <person name="Woodage T."/>
            <person name="Worley K.C."/>
            <person name="Wu D."/>
            <person name="Yang S."/>
            <person name="Yao Q.A."/>
            <person name="Ye J."/>
            <person name="Yeh R.-F."/>
            <person name="Zaveri J.S."/>
            <person name="Zhan M."/>
            <person name="Zhang G."/>
            <person name="Zhao Q."/>
            <person name="Zheng L."/>
            <person name="Zheng X.H."/>
            <person name="Zhong F.N."/>
            <person name="Zhong W."/>
            <person name="Zhou X."/>
            <person name="Zhu S.C."/>
            <person name="Zhu X."/>
            <person name="Smith H.O."/>
            <person name="Gibbs R.A."/>
            <person name="Myers E.W."/>
            <person name="Rubin G.M."/>
            <person name="Venter J.C."/>
        </authorList>
    </citation>
    <scope>NUCLEOTIDE SEQUENCE [LARGE SCALE GENOMIC DNA]</scope>
    <source>
        <strain evidence="8">Berkeley</strain>
    </source>
</reference>
<reference evidence="13" key="2">
    <citation type="journal article" date="2002" name="Genome Biol.">
        <title>Annotation of the Drosophila melanogaster euchromatic genome: a systematic review.</title>
        <authorList>
            <person name="Misra S."/>
            <person name="Crosby M.A."/>
            <person name="Mungall C.J."/>
            <person name="Matthews B.B."/>
            <person name="Campbell K.S."/>
            <person name="Hradecky P."/>
            <person name="Huang Y."/>
            <person name="Kaminker J.S."/>
            <person name="Millburn G.H."/>
            <person name="Prochnik S.E."/>
            <person name="Smith C.D."/>
            <person name="Tupy J.L."/>
            <person name="Whitfield E.J."/>
            <person name="Bayraktaroglu L."/>
            <person name="Berman B.P."/>
            <person name="Bettencourt B.R."/>
            <person name="Celniker S.E."/>
            <person name="de Grey A.D.N.J."/>
            <person name="Drysdale R.A."/>
            <person name="Harris N.L."/>
            <person name="Richter J."/>
            <person name="Russo S."/>
            <person name="Schroeder A.J."/>
            <person name="Shu S.Q."/>
            <person name="Stapleton M."/>
            <person name="Yamada C."/>
            <person name="Ashburner M."/>
            <person name="Gelbart W.M."/>
            <person name="Rubin G.M."/>
            <person name="Lewis S.E."/>
        </authorList>
    </citation>
    <scope>GENOME REANNOTATION</scope>
    <scope>ALTERNATIVE SPLICING</scope>
    <source>
        <strain evidence="10">Berkeley</strain>
    </source>
</reference>
<reference evidence="13" key="3">
    <citation type="journal article" date="2002" name="Genome Biol.">
        <title>A Drosophila full-length cDNA resource.</title>
        <authorList>
            <person name="Stapleton M."/>
            <person name="Carlson J.W."/>
            <person name="Brokstein P."/>
            <person name="Yu C."/>
            <person name="Champe M."/>
            <person name="George R.A."/>
            <person name="Guarin H."/>
            <person name="Kronmiller B."/>
            <person name="Pacleb J.M."/>
            <person name="Park S."/>
            <person name="Wan K.H."/>
            <person name="Rubin G.M."/>
            <person name="Celniker S.E."/>
        </authorList>
    </citation>
    <scope>NUCLEOTIDE SEQUENCE [LARGE SCALE MRNA] (ISOFORM A)</scope>
    <source>
        <strain evidence="9">Berkeley</strain>
        <tissue evidence="9">Head</tissue>
        <tissue evidence="9">Larva</tissue>
        <tissue evidence="9">Pupae</tissue>
    </source>
</reference>
<reference evidence="13" key="4">
    <citation type="journal article" date="2003" name="Curr. Biol.">
        <title>A SAGE approach to discovery of genes involved in autophagic cell death.</title>
        <authorList>
            <person name="Gorski S.M."/>
            <person name="Chittaranjan S."/>
            <person name="Pleasance E.D."/>
            <person name="Freeman J.D."/>
            <person name="Anderson C.L."/>
            <person name="Varhol R.J."/>
            <person name="Coughlin S.M."/>
            <person name="Zuyderduyn S.D."/>
            <person name="Jones S.J.M."/>
            <person name="Marra M.A."/>
        </authorList>
    </citation>
    <scope>IDENTIFICATION</scope>
</reference>
<evidence type="ECO:0000250" key="1"/>
<evidence type="ECO:0000250" key="2">
    <source>
        <dbReference type="UniProtKB" id="Q9UBX1"/>
    </source>
</evidence>
<evidence type="ECO:0000255" key="3"/>
<evidence type="ECO:0000255" key="4">
    <source>
        <dbReference type="PROSITE-ProRule" id="PRU10088"/>
    </source>
</evidence>
<evidence type="ECO:0000255" key="5">
    <source>
        <dbReference type="PROSITE-ProRule" id="PRU10089"/>
    </source>
</evidence>
<evidence type="ECO:0000255" key="6">
    <source>
        <dbReference type="PROSITE-ProRule" id="PRU10090"/>
    </source>
</evidence>
<evidence type="ECO:0000256" key="7">
    <source>
        <dbReference type="SAM" id="MobiDB-lite"/>
    </source>
</evidence>
<evidence type="ECO:0000269" key="8">
    <source>
    </source>
</evidence>
<evidence type="ECO:0000269" key="9">
    <source>
    </source>
</evidence>
<evidence type="ECO:0000269" key="10">
    <source>
    </source>
</evidence>
<evidence type="ECO:0000303" key="11">
    <source>
    </source>
</evidence>
<evidence type="ECO:0000303" key="12">
    <source>
    </source>
</evidence>
<evidence type="ECO:0000305" key="13"/>
<evidence type="ECO:0000312" key="14">
    <source>
        <dbReference type="FlyBase" id="FBgn0260462"/>
    </source>
</evidence>
<evidence type="ECO:0000312" key="15">
    <source>
        <dbReference type="Proteomes" id="UP000000803"/>
    </source>
</evidence>
<feature type="signal peptide" evidence="3">
    <location>
        <begin position="1"/>
        <end position="20"/>
    </location>
</feature>
<feature type="propeptide" id="PRO_0000026368" description="Activation peptide" evidence="1">
    <location>
        <begin position="21"/>
        <end position="393"/>
    </location>
</feature>
<feature type="chain" id="PRO_0000026369" description="Cathepsin F">
    <location>
        <begin position="394"/>
        <end position="614"/>
    </location>
</feature>
<feature type="region of interest" description="Disordered" evidence="7">
    <location>
        <begin position="25"/>
        <end position="50"/>
    </location>
</feature>
<feature type="compositionally biased region" description="Low complexity" evidence="7">
    <location>
        <begin position="29"/>
        <end position="45"/>
    </location>
</feature>
<feature type="active site" evidence="1">
    <location>
        <position position="418"/>
    </location>
</feature>
<feature type="active site" evidence="1">
    <location>
        <position position="555"/>
    </location>
</feature>
<feature type="active site" evidence="1">
    <location>
        <position position="581"/>
    </location>
</feature>
<feature type="glycosylation site" description="N-linked (GlcNAc...) asparagine" evidence="3">
    <location>
        <position position="151"/>
    </location>
</feature>
<feature type="glycosylation site" description="N-linked (GlcNAc...) asparagine" evidence="3">
    <location>
        <position position="492"/>
    </location>
</feature>
<feature type="glycosylation site" description="N-linked (GlcNAc...) asparagine" evidence="3">
    <location>
        <position position="510"/>
    </location>
</feature>
<feature type="disulfide bond" evidence="1">
    <location>
        <begin position="415"/>
        <end position="456"/>
    </location>
</feature>
<feature type="disulfide bond" evidence="1">
    <location>
        <begin position="449"/>
        <end position="489"/>
    </location>
</feature>
<feature type="disulfide bond" evidence="1">
    <location>
        <begin position="548"/>
        <end position="602"/>
    </location>
</feature>
<feature type="splice variant" id="VSP_050566" description="In isoform B." evidence="11">
    <location>
        <begin position="37"/>
        <end position="175"/>
    </location>
</feature>
<name>CATF_DROME</name>
<comment type="function">
    <text evidence="12">May have a role in autophagic cell death.</text>
</comment>
<comment type="catalytic activity">
    <reaction evidence="2">
        <text>The recombinant enzyme cleaves synthetic substrates with Phe and Leu (better than Val) in P2, with high specificity constant (kcat/Km) comparable to that of cathepsin L.</text>
        <dbReference type="EC" id="3.4.22.41"/>
    </reaction>
</comment>
<comment type="alternative products">
    <event type="alternative splicing"/>
    <isoform>
        <id>Q9VN93-1</id>
        <name evidence="11">A</name>
        <sequence type="displayed"/>
    </isoform>
    <isoform>
        <id>Q9VN93-2</id>
        <name evidence="11">B</name>
        <sequence type="described" ref="VSP_050566"/>
    </isoform>
</comment>
<comment type="similarity">
    <text evidence="4 5 6">Belongs to the peptidase C1 family.</text>
</comment>
<accession>Q9VN93</accession>
<accession>Q867H7</accession>
<accession>Q9VN92</accession>
<organism evidence="15">
    <name type="scientific">Drosophila melanogaster</name>
    <name type="common">Fruit fly</name>
    <dbReference type="NCBI Taxonomy" id="7227"/>
    <lineage>
        <taxon>Eukaryota</taxon>
        <taxon>Metazoa</taxon>
        <taxon>Ecdysozoa</taxon>
        <taxon>Arthropoda</taxon>
        <taxon>Hexapoda</taxon>
        <taxon>Insecta</taxon>
        <taxon>Pterygota</taxon>
        <taxon>Neoptera</taxon>
        <taxon>Endopterygota</taxon>
        <taxon>Diptera</taxon>
        <taxon>Brachycera</taxon>
        <taxon>Muscomorpha</taxon>
        <taxon>Ephydroidea</taxon>
        <taxon>Drosophilidae</taxon>
        <taxon>Drosophila</taxon>
        <taxon>Sophophora</taxon>
    </lineage>
</organism>
<keyword id="KW-0025">Alternative splicing</keyword>
<keyword id="KW-1015">Disulfide bond</keyword>
<keyword id="KW-0325">Glycoprotein</keyword>
<keyword id="KW-0378">Hydrolase</keyword>
<keyword id="KW-0645">Protease</keyword>
<keyword id="KW-1185">Reference proteome</keyword>
<keyword id="KW-0732">Signal</keyword>
<keyword id="KW-0788">Thiol protease</keyword>
<keyword id="KW-0865">Zymogen</keyword>
<dbReference type="EC" id="3.4.22.41" evidence="2"/>
<dbReference type="EMBL" id="AE014297">
    <property type="protein sequence ID" value="AAF52055.2"/>
    <property type="molecule type" value="Genomic_DNA"/>
</dbReference>
<dbReference type="EMBL" id="AE014297">
    <property type="protein sequence ID" value="AAN13266.1"/>
    <property type="molecule type" value="Genomic_DNA"/>
</dbReference>
<dbReference type="EMBL" id="AY121614">
    <property type="protein sequence ID" value="AAM51941.1"/>
    <property type="status" value="ALT_SEQ"/>
    <property type="molecule type" value="mRNA"/>
</dbReference>
<dbReference type="EMBL" id="BT003231">
    <property type="protein sequence ID" value="AAO24986.1"/>
    <property type="molecule type" value="mRNA"/>
</dbReference>
<dbReference type="RefSeq" id="NP_649521.1">
    <molecule id="Q9VN93-2"/>
    <property type="nucleotide sequence ID" value="NM_141264.4"/>
</dbReference>
<dbReference type="RefSeq" id="NP_730901.1">
    <molecule id="Q9VN93-1"/>
    <property type="nucleotide sequence ID" value="NM_169033.4"/>
</dbReference>
<dbReference type="RefSeq" id="NP_730902.2">
    <property type="nucleotide sequence ID" value="NM_169034.4"/>
</dbReference>
<dbReference type="SMR" id="Q9VN93"/>
<dbReference type="BioGRID" id="65841">
    <property type="interactions" value="10"/>
</dbReference>
<dbReference type="DIP" id="DIP-17491N"/>
<dbReference type="FunCoup" id="Q9VN93">
    <property type="interactions" value="192"/>
</dbReference>
<dbReference type="IntAct" id="Q9VN93">
    <property type="interactions" value="24"/>
</dbReference>
<dbReference type="STRING" id="7227.FBpp0078465"/>
<dbReference type="MEROPS" id="C01.A27"/>
<dbReference type="GlyGen" id="Q9VN93">
    <property type="glycosylation" value="3 sites"/>
</dbReference>
<dbReference type="PaxDb" id="7227-FBpp0078465"/>
<dbReference type="DNASU" id="40628"/>
<dbReference type="EnsemblMetazoa" id="FBtr0078822">
    <molecule id="Q9VN93-2"/>
    <property type="protein sequence ID" value="FBpp0078464"/>
    <property type="gene ID" value="FBgn0260462"/>
</dbReference>
<dbReference type="EnsemblMetazoa" id="FBtr0078823">
    <molecule id="Q9VN93-1"/>
    <property type="protein sequence ID" value="FBpp0078465"/>
    <property type="gene ID" value="FBgn0260462"/>
</dbReference>
<dbReference type="GeneID" id="40628"/>
<dbReference type="KEGG" id="dme:Dmel_CG12163"/>
<dbReference type="UCSC" id="CG12163-RA">
    <molecule id="Q9VN93-1"/>
    <property type="organism name" value="d. melanogaster"/>
</dbReference>
<dbReference type="AGR" id="FB:FBgn0260462"/>
<dbReference type="CTD" id="8722"/>
<dbReference type="FlyBase" id="FBgn0260462">
    <property type="gene designation" value="CtsF"/>
</dbReference>
<dbReference type="VEuPathDB" id="VectorBase:FBgn0260462"/>
<dbReference type="eggNOG" id="KOG1542">
    <property type="taxonomic scope" value="Eukaryota"/>
</dbReference>
<dbReference type="GeneTree" id="ENSGT00940000164681"/>
<dbReference type="InParanoid" id="Q9VN93"/>
<dbReference type="OMA" id="RSATPFW"/>
<dbReference type="OrthoDB" id="387093at2759"/>
<dbReference type="PhylomeDB" id="Q9VN93"/>
<dbReference type="Reactome" id="R-DME-114608">
    <property type="pathway name" value="Platelet degranulation"/>
</dbReference>
<dbReference type="Reactome" id="R-DME-2132295">
    <property type="pathway name" value="MHC class II antigen presentation"/>
</dbReference>
<dbReference type="BioGRID-ORCS" id="40628">
    <property type="hits" value="0 hits in 1 CRISPR screen"/>
</dbReference>
<dbReference type="ChiTaRS" id="CG12163">
    <property type="organism name" value="fly"/>
</dbReference>
<dbReference type="GenomeRNAi" id="40628"/>
<dbReference type="PRO" id="PR:Q9VN93"/>
<dbReference type="Proteomes" id="UP000000803">
    <property type="component" value="Chromosome 3R"/>
</dbReference>
<dbReference type="Bgee" id="FBgn0260462">
    <property type="expression patterns" value="Expressed in eye disc (Drosophila) and 256 other cell types or tissues"/>
</dbReference>
<dbReference type="ExpressionAtlas" id="Q9VN93">
    <property type="expression patterns" value="baseline and differential"/>
</dbReference>
<dbReference type="GO" id="GO:0005615">
    <property type="term" value="C:extracellular space"/>
    <property type="evidence" value="ECO:0000318"/>
    <property type="project" value="GO_Central"/>
</dbReference>
<dbReference type="GO" id="GO:0045169">
    <property type="term" value="C:fusome"/>
    <property type="evidence" value="ECO:0000314"/>
    <property type="project" value="FlyBase"/>
</dbReference>
<dbReference type="GO" id="GO:0005764">
    <property type="term" value="C:lysosome"/>
    <property type="evidence" value="ECO:0000318"/>
    <property type="project" value="GO_Central"/>
</dbReference>
<dbReference type="GO" id="GO:0098595">
    <property type="term" value="C:perivitelline space"/>
    <property type="evidence" value="ECO:0007005"/>
    <property type="project" value="FlyBase"/>
</dbReference>
<dbReference type="GO" id="GO:0004197">
    <property type="term" value="F:cysteine-type endopeptidase activity"/>
    <property type="evidence" value="ECO:0000318"/>
    <property type="project" value="GO_Central"/>
</dbReference>
<dbReference type="GO" id="GO:0008234">
    <property type="term" value="F:cysteine-type peptidase activity"/>
    <property type="evidence" value="ECO:0000314"/>
    <property type="project" value="FlyBase"/>
</dbReference>
<dbReference type="GO" id="GO:0051603">
    <property type="term" value="P:proteolysis involved in protein catabolic process"/>
    <property type="evidence" value="ECO:0000318"/>
    <property type="project" value="GO_Central"/>
</dbReference>
<dbReference type="CDD" id="cd02248">
    <property type="entry name" value="Peptidase_C1A"/>
    <property type="match status" value="1"/>
</dbReference>
<dbReference type="FunFam" id="3.90.70.10:FF:000130">
    <property type="entry name" value="Cysteine proteinase 1"/>
    <property type="match status" value="1"/>
</dbReference>
<dbReference type="Gene3D" id="3.10.450.10">
    <property type="match status" value="1"/>
</dbReference>
<dbReference type="Gene3D" id="3.90.70.10">
    <property type="entry name" value="Cysteine proteinases"/>
    <property type="match status" value="1"/>
</dbReference>
<dbReference type="InterPro" id="IPR046350">
    <property type="entry name" value="Cystatin_sf"/>
</dbReference>
<dbReference type="InterPro" id="IPR038765">
    <property type="entry name" value="Papain-like_cys_pep_sf"/>
</dbReference>
<dbReference type="InterPro" id="IPR025661">
    <property type="entry name" value="Pept_asp_AS"/>
</dbReference>
<dbReference type="InterPro" id="IPR000169">
    <property type="entry name" value="Pept_cys_AS"/>
</dbReference>
<dbReference type="InterPro" id="IPR025660">
    <property type="entry name" value="Pept_his_AS"/>
</dbReference>
<dbReference type="InterPro" id="IPR013128">
    <property type="entry name" value="Peptidase_C1A"/>
</dbReference>
<dbReference type="InterPro" id="IPR000668">
    <property type="entry name" value="Peptidase_C1A_C"/>
</dbReference>
<dbReference type="InterPro" id="IPR039417">
    <property type="entry name" value="Peptidase_C1A_papain-like"/>
</dbReference>
<dbReference type="InterPro" id="IPR013201">
    <property type="entry name" value="Prot_inhib_I29"/>
</dbReference>
<dbReference type="PANTHER" id="PTHR12411">
    <property type="entry name" value="CYSTEINE PROTEASE FAMILY C1-RELATED"/>
    <property type="match status" value="1"/>
</dbReference>
<dbReference type="Pfam" id="PF08246">
    <property type="entry name" value="Inhibitor_I29"/>
    <property type="match status" value="1"/>
</dbReference>
<dbReference type="Pfam" id="PF00112">
    <property type="entry name" value="Peptidase_C1"/>
    <property type="match status" value="1"/>
</dbReference>
<dbReference type="PRINTS" id="PR00705">
    <property type="entry name" value="PAPAIN"/>
</dbReference>
<dbReference type="SMART" id="SM00848">
    <property type="entry name" value="Inhibitor_I29"/>
    <property type="match status" value="1"/>
</dbReference>
<dbReference type="SMART" id="SM00645">
    <property type="entry name" value="Pept_C1"/>
    <property type="match status" value="1"/>
</dbReference>
<dbReference type="SUPFAM" id="SSF54403">
    <property type="entry name" value="Cystatin/monellin"/>
    <property type="match status" value="1"/>
</dbReference>
<dbReference type="SUPFAM" id="SSF54001">
    <property type="entry name" value="Cysteine proteinases"/>
    <property type="match status" value="1"/>
</dbReference>
<dbReference type="PROSITE" id="PS00640">
    <property type="entry name" value="THIOL_PROTEASE_ASN"/>
    <property type="match status" value="1"/>
</dbReference>
<dbReference type="PROSITE" id="PS00139">
    <property type="entry name" value="THIOL_PROTEASE_CYS"/>
    <property type="match status" value="1"/>
</dbReference>
<dbReference type="PROSITE" id="PS00639">
    <property type="entry name" value="THIOL_PROTEASE_HIS"/>
    <property type="match status" value="1"/>
</dbReference>
<sequence length="614" mass="68961">MRLFAAATVALVLLLGQAAGEELAEERAGQAQGDAESTESSETTTDQAVSEPPITLVHVLNPGEREYLSPNLIGVQNIAMTFLPLSMNFVNIIDAFREITAGVRYEILLNALDTKAIQPAEADIVCRLVILEKPWLRTQWGDKHRELVTSNCTDPAVNSVAGDPAEKARLLNEKYVHRSRRSANDILGRHKPYDEEAAKAQLQKSLDKLTAGEGPHYKIVKVYSASRQVDSGILTRIDADLIDGSEEQHRCIVDIWTKVWVRKDEHEITFKCRNQPVVQARHTRSVEWAEKKTHKKHSHRFDKVDHLFYKFQVRFGRRYVSTAERQMRLRIFRQNLKTIEELNANEMGSAKYGITEFADMTSSEYKERTGLWQRDEAKATGGSAAVVPAYHGELPKEFDWRQKDAVTQVKNQGSCGSCWAFSVTGNIEGLYAVKTGELKEFSEQELLDCDTTDSACNGGLMDNAYKAIKDIGGLEYEAEYPYKAKKNQCHFNRTLSHVQVAGFVDLPKGNETAMQEWLLANGPISIGINANAMQFYRGGVSHPWKALCSKKNLDHGVLVVGYGVSDYPNFHKTLPYWIVKNSWGPRWGEQGYYRVYRGDNTCGVSEMATSAVLA</sequence>
<protein>
    <recommendedName>
        <fullName evidence="13">Cathepsin F</fullName>
        <ecNumber evidence="2">3.4.22.41</ecNumber>
    </recommendedName>
    <alternativeName>
        <fullName>Cysteine proteinase CtsF</fullName>
    </alternativeName>
</protein>